<organism>
    <name type="scientific">Mycobacterium avium (strain 104)</name>
    <dbReference type="NCBI Taxonomy" id="243243"/>
    <lineage>
        <taxon>Bacteria</taxon>
        <taxon>Bacillati</taxon>
        <taxon>Actinomycetota</taxon>
        <taxon>Actinomycetes</taxon>
        <taxon>Mycobacteriales</taxon>
        <taxon>Mycobacteriaceae</taxon>
        <taxon>Mycobacterium</taxon>
        <taxon>Mycobacterium avium complex (MAC)</taxon>
    </lineage>
</organism>
<evidence type="ECO:0000255" key="1">
    <source>
        <dbReference type="HAMAP-Rule" id="MF_00407"/>
    </source>
</evidence>
<proteinExistence type="inferred from homology"/>
<comment type="function">
    <text evidence="1">DNA ligase that seals nicks in double-stranded DNA during DNA replication, DNA recombination and DNA repair.</text>
</comment>
<comment type="catalytic activity">
    <reaction evidence="1">
        <text>ATP + (deoxyribonucleotide)n-3'-hydroxyl + 5'-phospho-(deoxyribonucleotide)m = (deoxyribonucleotide)n+m + AMP + diphosphate.</text>
        <dbReference type="EC" id="6.5.1.1"/>
    </reaction>
</comment>
<comment type="cofactor">
    <cofactor evidence="1">
        <name>Mg(2+)</name>
        <dbReference type="ChEBI" id="CHEBI:18420"/>
    </cofactor>
</comment>
<comment type="similarity">
    <text evidence="1">Belongs to the ATP-dependent DNA ligase family.</text>
</comment>
<keyword id="KW-0067">ATP-binding</keyword>
<keyword id="KW-0131">Cell cycle</keyword>
<keyword id="KW-0132">Cell division</keyword>
<keyword id="KW-0227">DNA damage</keyword>
<keyword id="KW-0233">DNA recombination</keyword>
<keyword id="KW-0234">DNA repair</keyword>
<keyword id="KW-0235">DNA replication</keyword>
<keyword id="KW-0436">Ligase</keyword>
<keyword id="KW-0460">Magnesium</keyword>
<keyword id="KW-0479">Metal-binding</keyword>
<keyword id="KW-0547">Nucleotide-binding</keyword>
<name>DNLI_MYCA1</name>
<reference key="1">
    <citation type="submission" date="2006-10" db="EMBL/GenBank/DDBJ databases">
        <authorList>
            <person name="Fleischmann R.D."/>
            <person name="Dodson R.J."/>
            <person name="Haft D.H."/>
            <person name="Merkel J.S."/>
            <person name="Nelson W.C."/>
            <person name="Fraser C.M."/>
        </authorList>
    </citation>
    <scope>NUCLEOTIDE SEQUENCE [LARGE SCALE GENOMIC DNA]</scope>
    <source>
        <strain>104</strain>
    </source>
</reference>
<dbReference type="EC" id="6.5.1.1" evidence="1"/>
<dbReference type="EMBL" id="CP000479">
    <property type="protein sequence ID" value="ABK65463.1"/>
    <property type="molecule type" value="Genomic_DNA"/>
</dbReference>
<dbReference type="SMR" id="A0QJL0"/>
<dbReference type="KEGG" id="mav:MAV_3937"/>
<dbReference type="HOGENOM" id="CLU_005138_6_1_11"/>
<dbReference type="Proteomes" id="UP000001574">
    <property type="component" value="Chromosome"/>
</dbReference>
<dbReference type="GO" id="GO:0005524">
    <property type="term" value="F:ATP binding"/>
    <property type="evidence" value="ECO:0007669"/>
    <property type="project" value="UniProtKB-UniRule"/>
</dbReference>
<dbReference type="GO" id="GO:0003677">
    <property type="term" value="F:DNA binding"/>
    <property type="evidence" value="ECO:0007669"/>
    <property type="project" value="InterPro"/>
</dbReference>
<dbReference type="GO" id="GO:0003910">
    <property type="term" value="F:DNA ligase (ATP) activity"/>
    <property type="evidence" value="ECO:0007669"/>
    <property type="project" value="UniProtKB-UniRule"/>
</dbReference>
<dbReference type="GO" id="GO:0046872">
    <property type="term" value="F:metal ion binding"/>
    <property type="evidence" value="ECO:0007669"/>
    <property type="project" value="UniProtKB-KW"/>
</dbReference>
<dbReference type="GO" id="GO:0051301">
    <property type="term" value="P:cell division"/>
    <property type="evidence" value="ECO:0007669"/>
    <property type="project" value="UniProtKB-KW"/>
</dbReference>
<dbReference type="GO" id="GO:0071897">
    <property type="term" value="P:DNA biosynthetic process"/>
    <property type="evidence" value="ECO:0007669"/>
    <property type="project" value="InterPro"/>
</dbReference>
<dbReference type="GO" id="GO:0006310">
    <property type="term" value="P:DNA recombination"/>
    <property type="evidence" value="ECO:0007669"/>
    <property type="project" value="UniProtKB-UniRule"/>
</dbReference>
<dbReference type="GO" id="GO:0006281">
    <property type="term" value="P:DNA repair"/>
    <property type="evidence" value="ECO:0007669"/>
    <property type="project" value="UniProtKB-UniRule"/>
</dbReference>
<dbReference type="GO" id="GO:0006260">
    <property type="term" value="P:DNA replication"/>
    <property type="evidence" value="ECO:0007669"/>
    <property type="project" value="UniProtKB-UniRule"/>
</dbReference>
<dbReference type="CDD" id="cd07901">
    <property type="entry name" value="Adenylation_DNA_ligase_Arch_LigB"/>
    <property type="match status" value="1"/>
</dbReference>
<dbReference type="CDD" id="cd07972">
    <property type="entry name" value="OBF_DNA_ligase_Arch_LigB"/>
    <property type="match status" value="1"/>
</dbReference>
<dbReference type="FunFam" id="2.40.50.140:FF:000163">
    <property type="entry name" value="Probable DNA ligase"/>
    <property type="match status" value="1"/>
</dbReference>
<dbReference type="FunFam" id="3.30.470.30:FF:000012">
    <property type="entry name" value="Probable DNA ligase"/>
    <property type="match status" value="1"/>
</dbReference>
<dbReference type="Gene3D" id="1.10.3260.10">
    <property type="entry name" value="DNA ligase, ATP-dependent, N-terminal domain"/>
    <property type="match status" value="1"/>
</dbReference>
<dbReference type="Gene3D" id="3.30.470.30">
    <property type="entry name" value="DNA ligase/mRNA capping enzyme"/>
    <property type="match status" value="1"/>
</dbReference>
<dbReference type="Gene3D" id="2.40.50.140">
    <property type="entry name" value="Nucleic acid-binding proteins"/>
    <property type="match status" value="1"/>
</dbReference>
<dbReference type="HAMAP" id="MF_00407">
    <property type="entry name" value="DNA_ligase"/>
    <property type="match status" value="1"/>
</dbReference>
<dbReference type="InterPro" id="IPR050191">
    <property type="entry name" value="ATP-dep_DNA_ligase"/>
</dbReference>
<dbReference type="InterPro" id="IPR022865">
    <property type="entry name" value="DNA_ligae_ATP-dep_bac/arc"/>
</dbReference>
<dbReference type="InterPro" id="IPR000977">
    <property type="entry name" value="DNA_ligase_ATP-dep"/>
</dbReference>
<dbReference type="InterPro" id="IPR012309">
    <property type="entry name" value="DNA_ligase_ATP-dep_C"/>
</dbReference>
<dbReference type="InterPro" id="IPR012310">
    <property type="entry name" value="DNA_ligase_ATP-dep_cent"/>
</dbReference>
<dbReference type="InterPro" id="IPR016059">
    <property type="entry name" value="DNA_ligase_ATP-dep_CS"/>
</dbReference>
<dbReference type="InterPro" id="IPR012308">
    <property type="entry name" value="DNA_ligase_ATP-dep_N"/>
</dbReference>
<dbReference type="InterPro" id="IPR036599">
    <property type="entry name" value="DNA_ligase_N_sf"/>
</dbReference>
<dbReference type="InterPro" id="IPR012340">
    <property type="entry name" value="NA-bd_OB-fold"/>
</dbReference>
<dbReference type="NCBIfam" id="TIGR00574">
    <property type="entry name" value="dnl1"/>
    <property type="match status" value="1"/>
</dbReference>
<dbReference type="NCBIfam" id="NF002868">
    <property type="entry name" value="PRK03180.1"/>
    <property type="match status" value="1"/>
</dbReference>
<dbReference type="PANTHER" id="PTHR45674">
    <property type="entry name" value="DNA LIGASE 1/3 FAMILY MEMBER"/>
    <property type="match status" value="1"/>
</dbReference>
<dbReference type="PANTHER" id="PTHR45674:SF13">
    <property type="entry name" value="DNA LIGASE-RELATED"/>
    <property type="match status" value="1"/>
</dbReference>
<dbReference type="Pfam" id="PF04679">
    <property type="entry name" value="DNA_ligase_A_C"/>
    <property type="match status" value="1"/>
</dbReference>
<dbReference type="Pfam" id="PF01068">
    <property type="entry name" value="DNA_ligase_A_M"/>
    <property type="match status" value="1"/>
</dbReference>
<dbReference type="Pfam" id="PF04675">
    <property type="entry name" value="DNA_ligase_A_N"/>
    <property type="match status" value="1"/>
</dbReference>
<dbReference type="SUPFAM" id="SSF117018">
    <property type="entry name" value="ATP-dependent DNA ligase DNA-binding domain"/>
    <property type="match status" value="1"/>
</dbReference>
<dbReference type="SUPFAM" id="SSF56091">
    <property type="entry name" value="DNA ligase/mRNA capping enzyme, catalytic domain"/>
    <property type="match status" value="1"/>
</dbReference>
<dbReference type="SUPFAM" id="SSF50249">
    <property type="entry name" value="Nucleic acid-binding proteins"/>
    <property type="match status" value="1"/>
</dbReference>
<dbReference type="PROSITE" id="PS00697">
    <property type="entry name" value="DNA_LIGASE_A1"/>
    <property type="match status" value="1"/>
</dbReference>
<dbReference type="PROSITE" id="PS00333">
    <property type="entry name" value="DNA_LIGASE_A2"/>
    <property type="match status" value="1"/>
</dbReference>
<dbReference type="PROSITE" id="PS50160">
    <property type="entry name" value="DNA_LIGASE_A3"/>
    <property type="match status" value="1"/>
</dbReference>
<feature type="chain" id="PRO_0000365221" description="Probable DNA ligase">
    <location>
        <begin position="1"/>
        <end position="526"/>
    </location>
</feature>
<feature type="active site" description="N6-AMP-lysine intermediate" evidence="1">
    <location>
        <position position="230"/>
    </location>
</feature>
<feature type="binding site" evidence="1">
    <location>
        <position position="228"/>
    </location>
    <ligand>
        <name>ATP</name>
        <dbReference type="ChEBI" id="CHEBI:30616"/>
    </ligand>
</feature>
<feature type="binding site" evidence="1">
    <location>
        <position position="235"/>
    </location>
    <ligand>
        <name>ATP</name>
        <dbReference type="ChEBI" id="CHEBI:30616"/>
    </ligand>
</feature>
<feature type="binding site" evidence="1">
    <location>
        <position position="250"/>
    </location>
    <ligand>
        <name>ATP</name>
        <dbReference type="ChEBI" id="CHEBI:30616"/>
    </ligand>
</feature>
<feature type="binding site" evidence="1">
    <location>
        <position position="279"/>
    </location>
    <ligand>
        <name>ATP</name>
        <dbReference type="ChEBI" id="CHEBI:30616"/>
    </ligand>
</feature>
<feature type="binding site" evidence="1">
    <location>
        <position position="319"/>
    </location>
    <ligand>
        <name>ATP</name>
        <dbReference type="ChEBI" id="CHEBI:30616"/>
    </ligand>
</feature>
<feature type="binding site" evidence="1">
    <location>
        <position position="391"/>
    </location>
    <ligand>
        <name>ATP</name>
        <dbReference type="ChEBI" id="CHEBI:30616"/>
    </ligand>
</feature>
<feature type="binding site" evidence="1">
    <location>
        <position position="397"/>
    </location>
    <ligand>
        <name>ATP</name>
        <dbReference type="ChEBI" id="CHEBI:30616"/>
    </ligand>
</feature>
<sequence>MSPSHAKLATVLLFDVATASADVGGTPSRLTKVARIADLLRRAAPDAALVAIVVSWLSGELRQRQIGVGWAALRSRPPAAAHPTLTVVAVDAAFAEIGAVAGKGAQARRAALLNALFAAATETEQTFLLRLLGGELRQGALAGIMADAVARAAGIPAAAVQRAAMLGGDLPAVAAAALSGEAAALSGEASALDAFTLRVGRPVAPMLAQTAAGVAEAIERHGGQAIFEAKLDGARVQIHRAGDQVTVYTRSLDDVTARLPEVVTATLALPVEALIADGEAIALRPDNSPQRFQVTASRFGRSVDVAAAVAAQPLSVFFFDILHCDGVDLLDAPTTDRLAALDALVPPAQRVDQLLTADPDAAGRFLEATLAAGHEGVMAKAPGAPYQAGRRGAGWLKVKPVHTLDLVVLAVEWGSGRRRGKLSNIHLGARDPATGEFVMVGKTFKGMTDAMLDWQTARFTELAVGGTDGYVVRVRPEQVVEVAVDGVQKSSRYPGGLALRFARVLRYRDDKGPAEADTIDAVRALY</sequence>
<gene>
    <name evidence="1" type="primary">lig</name>
    <name type="ordered locus">MAV_3937</name>
</gene>
<protein>
    <recommendedName>
        <fullName evidence="1">Probable DNA ligase</fullName>
        <ecNumber evidence="1">6.5.1.1</ecNumber>
    </recommendedName>
    <alternativeName>
        <fullName evidence="1">Polydeoxyribonucleotide synthase [ATP]</fullName>
    </alternativeName>
</protein>
<accession>A0QJL0</accession>